<gene>
    <name type="primary">RPAP2</name>
</gene>
<evidence type="ECO:0000250" key="1"/>
<evidence type="ECO:0000250" key="2">
    <source>
        <dbReference type="UniProtKB" id="Q5I0E6"/>
    </source>
</evidence>
<evidence type="ECO:0000250" key="3">
    <source>
        <dbReference type="UniProtKB" id="Q8IXW5"/>
    </source>
</evidence>
<evidence type="ECO:0000255" key="4"/>
<evidence type="ECO:0000255" key="5">
    <source>
        <dbReference type="PROSITE-ProRule" id="PRU00812"/>
    </source>
</evidence>
<evidence type="ECO:0000256" key="6">
    <source>
        <dbReference type="SAM" id="MobiDB-lite"/>
    </source>
</evidence>
<evidence type="ECO:0000305" key="7"/>
<comment type="function">
    <text evidence="3">Protein phosphatase that displays CTD phosphatase activity and regulates transcription of snRNA genes. Recognizes and binds phosphorylated 'Ser-7' of the C-terminal heptapeptide repeat domain (CTD) of the largest RNA polymerase II subunit POLR2A, and mediates dephosphorylation of 'Ser-5' of the CTD, thereby promoting transcription of snRNA genes (By similarity). Downstream of EIF2AK3/PERK, dephosphorylates ERN1, a sensor for the endoplasmic reticulum unfolded protein response (UPR), to abort failed ER-stress adaptation and trigger apoptosis (By similarity).</text>
</comment>
<comment type="catalytic activity">
    <reaction evidence="3">
        <text>O-phospho-L-seryl-[protein] + H2O = L-seryl-[protein] + phosphate</text>
        <dbReference type="Rhea" id="RHEA:20629"/>
        <dbReference type="Rhea" id="RHEA-COMP:9863"/>
        <dbReference type="Rhea" id="RHEA-COMP:11604"/>
        <dbReference type="ChEBI" id="CHEBI:15377"/>
        <dbReference type="ChEBI" id="CHEBI:29999"/>
        <dbReference type="ChEBI" id="CHEBI:43474"/>
        <dbReference type="ChEBI" id="CHEBI:83421"/>
        <dbReference type="EC" id="3.1.3.16"/>
    </reaction>
</comment>
<comment type="catalytic activity">
    <reaction>
        <text>O-phospho-L-threonyl-[protein] + H2O = L-threonyl-[protein] + phosphate</text>
        <dbReference type="Rhea" id="RHEA:47004"/>
        <dbReference type="Rhea" id="RHEA-COMP:11060"/>
        <dbReference type="Rhea" id="RHEA-COMP:11605"/>
        <dbReference type="ChEBI" id="CHEBI:15377"/>
        <dbReference type="ChEBI" id="CHEBI:30013"/>
        <dbReference type="ChEBI" id="CHEBI:43474"/>
        <dbReference type="ChEBI" id="CHEBI:61977"/>
        <dbReference type="EC" id="3.1.3.16"/>
    </reaction>
</comment>
<comment type="subunit">
    <text evidence="1">Associates with the RNA polymerase II complex. Interacts with transcribing RNA polymerase II phosphorylated on 'Ser-7' on CTD (By similarity).</text>
</comment>
<comment type="subcellular location">
    <subcellularLocation>
        <location evidence="1">Cytoplasm</location>
    </subcellularLocation>
    <subcellularLocation>
        <location evidence="1">Nucleus</location>
    </subcellularLocation>
    <text evidence="1">Shuttles between the cytoplasm and the nucleus in a CRM1-dependent manner.</text>
</comment>
<comment type="similarity">
    <text evidence="5 7">Belongs to the RPAP2 family.</text>
</comment>
<sequence length="608" mass="68698">MADWVGPCSAGRKARRSRASRDVAGTKQTSALNQEDASQRKAELEAAVRKKIEFERKALHIVEQLLEENISEEFLRECGKFITPAHYSDVVDERSIIKLCGYPLCQNKLGIVPKQKYKISTKTNKVYDITERKCFCSNFCYKASKFFEAQIPKSPVWIREEERHPDFQLLQDGQSGPSGEEIQLCSKAIKTSDIDSPGHFEKHYESSSSSSHSDSSSDNEQDFVSSILPGNRPNATRPQLHEKSIMKKKAGQKVNSQHESKEQTVVDVIEQLGNCRLDNQEKATACELPLQNVNTQISSNSSLQKKLEASEISDIKYSSSKVTLVGISKKSAEHFKRKFAKSNQVSGSASSSLQVCPEIAKANLLKALKETLIEWKTEETLRFLYGQNYASVCLKSSSTPLVKEEELDEDDMNSDPDSHSPALQELNSLDESLPFRASDTAIKPLPSYENLKKETETLNLRIREFYRGRYVLNEETTKSQDSEEHDPTFPLIDSSSQNQIRKRIVLEKLNKVLPGLLGPLQITLGDIYTQLKNLVHTFRLTNRNIIHKPAEWTLIALVLLSILTSTLGIQKLSQENVMFTQFMTTLLEELHLKNEDLESLTIIFRTSC</sequence>
<organism>
    <name type="scientific">Bos taurus</name>
    <name type="common">Bovine</name>
    <dbReference type="NCBI Taxonomy" id="9913"/>
    <lineage>
        <taxon>Eukaryota</taxon>
        <taxon>Metazoa</taxon>
        <taxon>Chordata</taxon>
        <taxon>Craniata</taxon>
        <taxon>Vertebrata</taxon>
        <taxon>Euteleostomi</taxon>
        <taxon>Mammalia</taxon>
        <taxon>Eutheria</taxon>
        <taxon>Laurasiatheria</taxon>
        <taxon>Artiodactyla</taxon>
        <taxon>Ruminantia</taxon>
        <taxon>Pecora</taxon>
        <taxon>Bovidae</taxon>
        <taxon>Bovinae</taxon>
        <taxon>Bos</taxon>
    </lineage>
</organism>
<protein>
    <recommendedName>
        <fullName>Putative RNA polymerase II subunit B1 CTD phosphatase RPAP2</fullName>
        <ecNumber>3.1.3.16</ecNumber>
    </recommendedName>
    <alternativeName>
        <fullName>RNA polymerase II-associated protein 2</fullName>
    </alternativeName>
</protein>
<keyword id="KW-0007">Acetylation</keyword>
<keyword id="KW-0175">Coiled coil</keyword>
<keyword id="KW-0963">Cytoplasm</keyword>
<keyword id="KW-0378">Hydrolase</keyword>
<keyword id="KW-0479">Metal-binding</keyword>
<keyword id="KW-0539">Nucleus</keyword>
<keyword id="KW-0597">Phosphoprotein</keyword>
<keyword id="KW-0904">Protein phosphatase</keyword>
<keyword id="KW-1185">Reference proteome</keyword>
<keyword id="KW-0804">Transcription</keyword>
<keyword id="KW-0805">Transcription regulation</keyword>
<keyword id="KW-0862">Zinc</keyword>
<keyword id="KW-0863">Zinc-finger</keyword>
<feature type="initiator methionine" description="Removed" evidence="3">
    <location>
        <position position="1"/>
    </location>
</feature>
<feature type="chain" id="PRO_0000416288" description="Putative RNA polymerase II subunit B1 CTD phosphatase RPAP2">
    <location>
        <begin position="2"/>
        <end position="608"/>
    </location>
</feature>
<feature type="zinc finger region" description="RTR1-type" evidence="5">
    <location>
        <begin position="77"/>
        <end position="160"/>
    </location>
</feature>
<feature type="region of interest" description="Disordered" evidence="6">
    <location>
        <begin position="1"/>
        <end position="38"/>
    </location>
</feature>
<feature type="region of interest" description="Disordered" evidence="6">
    <location>
        <begin position="193"/>
        <end position="262"/>
    </location>
</feature>
<feature type="region of interest" description="Disordered" evidence="6">
    <location>
        <begin position="403"/>
        <end position="423"/>
    </location>
</feature>
<feature type="coiled-coil region" evidence="4">
    <location>
        <begin position="33"/>
        <end position="68"/>
    </location>
</feature>
<feature type="compositionally biased region" description="Polar residues" evidence="6">
    <location>
        <begin position="26"/>
        <end position="36"/>
    </location>
</feature>
<feature type="compositionally biased region" description="Basic and acidic residues" evidence="6">
    <location>
        <begin position="193"/>
        <end position="205"/>
    </location>
</feature>
<feature type="compositionally biased region" description="Low complexity" evidence="6">
    <location>
        <begin position="206"/>
        <end position="218"/>
    </location>
</feature>
<feature type="compositionally biased region" description="Acidic residues" evidence="6">
    <location>
        <begin position="405"/>
        <end position="414"/>
    </location>
</feature>
<feature type="binding site" evidence="5">
    <location>
        <position position="100"/>
    </location>
    <ligand>
        <name>Zn(2+)</name>
        <dbReference type="ChEBI" id="CHEBI:29105"/>
    </ligand>
</feature>
<feature type="binding site" evidence="5">
    <location>
        <position position="105"/>
    </location>
    <ligand>
        <name>Zn(2+)</name>
        <dbReference type="ChEBI" id="CHEBI:29105"/>
    </ligand>
</feature>
<feature type="binding site" evidence="5">
    <location>
        <position position="136"/>
    </location>
    <ligand>
        <name>Zn(2+)</name>
        <dbReference type="ChEBI" id="CHEBI:29105"/>
    </ligand>
</feature>
<feature type="binding site" evidence="5">
    <location>
        <position position="140"/>
    </location>
    <ligand>
        <name>Zn(2+)</name>
        <dbReference type="ChEBI" id="CHEBI:29105"/>
    </ligand>
</feature>
<feature type="modified residue" description="N-acetylalanine" evidence="3">
    <location>
        <position position="2"/>
    </location>
</feature>
<feature type="modified residue" description="Phosphoserine" evidence="3">
    <location>
        <position position="9"/>
    </location>
</feature>
<feature type="modified residue" description="Phosphoserine" evidence="2">
    <location>
        <position position="216"/>
    </location>
</feature>
<feature type="modified residue" description="Phosphoserine" evidence="3">
    <location>
        <position position="432"/>
    </location>
</feature>
<feature type="modified residue" description="Phosphoserine" evidence="3">
    <location>
        <position position="479"/>
    </location>
</feature>
<feature type="sequence conflict" description="In Ref. 2; AAI23868." evidence="7" ref="2">
    <original>N</original>
    <variation>I</variation>
    <location>
        <position position="33"/>
    </location>
</feature>
<name>RPAP2_BOVIN</name>
<reference key="1">
    <citation type="journal article" date="2009" name="Genome Biol.">
        <title>A whole-genome assembly of the domestic cow, Bos taurus.</title>
        <authorList>
            <person name="Zimin A.V."/>
            <person name="Delcher A.L."/>
            <person name="Florea L."/>
            <person name="Kelley D.R."/>
            <person name="Schatz M.C."/>
            <person name="Puiu D."/>
            <person name="Hanrahan F."/>
            <person name="Pertea G."/>
            <person name="Van Tassell C.P."/>
            <person name="Sonstegard T.S."/>
            <person name="Marcais G."/>
            <person name="Roberts M."/>
            <person name="Subramanian P."/>
            <person name="Yorke J.A."/>
            <person name="Salzberg S.L."/>
        </authorList>
    </citation>
    <scope>NUCLEOTIDE SEQUENCE [LARGE SCALE GENOMIC DNA]</scope>
    <source>
        <strain>Hereford</strain>
    </source>
</reference>
<reference key="2">
    <citation type="submission" date="2006-09" db="EMBL/GenBank/DDBJ databases">
        <authorList>
            <consortium name="NIH - Mammalian Gene Collection (MGC) project"/>
        </authorList>
    </citation>
    <scope>NUCLEOTIDE SEQUENCE [LARGE SCALE MRNA]</scope>
    <source>
        <strain>Hereford</strain>
        <tissue>Basal ganglia</tissue>
    </source>
</reference>
<dbReference type="EC" id="3.1.3.16"/>
<dbReference type="EMBL" id="DAAA02007907">
    <property type="status" value="NOT_ANNOTATED_CDS"/>
    <property type="molecule type" value="Genomic_DNA"/>
</dbReference>
<dbReference type="EMBL" id="BC123867">
    <property type="protein sequence ID" value="AAI23868.1"/>
    <property type="molecule type" value="mRNA"/>
</dbReference>
<dbReference type="RefSeq" id="NP_001096736.1">
    <property type="nucleotide sequence ID" value="NM_001103266.1"/>
</dbReference>
<dbReference type="RefSeq" id="XP_005204350.1">
    <property type="nucleotide sequence ID" value="XM_005204293.3"/>
</dbReference>
<dbReference type="RefSeq" id="XP_005204351.1">
    <property type="nucleotide sequence ID" value="XM_005204294.3"/>
</dbReference>
<dbReference type="RefSeq" id="XP_010801614.1">
    <property type="nucleotide sequence ID" value="XM_010803312.2"/>
</dbReference>
<dbReference type="RefSeq" id="XP_010801615.1">
    <property type="nucleotide sequence ID" value="XM_010803313.2"/>
</dbReference>
<dbReference type="SMR" id="F6RRD7"/>
<dbReference type="FunCoup" id="F6RRD7">
    <property type="interactions" value="2840"/>
</dbReference>
<dbReference type="STRING" id="9913.ENSBTAP00000066661"/>
<dbReference type="PaxDb" id="9913-ENSBTAP00000041791"/>
<dbReference type="GeneID" id="529184"/>
<dbReference type="KEGG" id="bta:529184"/>
<dbReference type="CTD" id="79871"/>
<dbReference type="eggNOG" id="KOG4780">
    <property type="taxonomic scope" value="Eukaryota"/>
</dbReference>
<dbReference type="HOGENOM" id="CLU_019258_1_0_1"/>
<dbReference type="InParanoid" id="F6RRD7"/>
<dbReference type="OrthoDB" id="2590500at2759"/>
<dbReference type="TreeFam" id="TF331431"/>
<dbReference type="Proteomes" id="UP000009136">
    <property type="component" value="Unplaced"/>
</dbReference>
<dbReference type="GO" id="GO:0005737">
    <property type="term" value="C:cytoplasm"/>
    <property type="evidence" value="ECO:0000250"/>
    <property type="project" value="UniProtKB"/>
</dbReference>
<dbReference type="GO" id="GO:0005634">
    <property type="term" value="C:nucleus"/>
    <property type="evidence" value="ECO:0000250"/>
    <property type="project" value="UniProtKB"/>
</dbReference>
<dbReference type="GO" id="GO:0097550">
    <property type="term" value="C:transcription preinitiation complex"/>
    <property type="evidence" value="ECO:0000250"/>
    <property type="project" value="UniProtKB"/>
</dbReference>
<dbReference type="GO" id="GO:0004722">
    <property type="term" value="F:protein serine/threonine phosphatase activity"/>
    <property type="evidence" value="ECO:0000250"/>
    <property type="project" value="UniProtKB"/>
</dbReference>
<dbReference type="GO" id="GO:0043175">
    <property type="term" value="F:RNA polymerase core enzyme binding"/>
    <property type="evidence" value="ECO:0007669"/>
    <property type="project" value="InterPro"/>
</dbReference>
<dbReference type="GO" id="GO:0008420">
    <property type="term" value="F:RNA polymerase II CTD heptapeptide repeat phosphatase activity"/>
    <property type="evidence" value="ECO:0000250"/>
    <property type="project" value="UniProtKB"/>
</dbReference>
<dbReference type="GO" id="GO:0008270">
    <property type="term" value="F:zinc ion binding"/>
    <property type="evidence" value="ECO:0007669"/>
    <property type="project" value="UniProtKB-KW"/>
</dbReference>
<dbReference type="GO" id="GO:0036499">
    <property type="term" value="P:PERK-mediated unfolded protein response"/>
    <property type="evidence" value="ECO:0000250"/>
    <property type="project" value="UniProtKB"/>
</dbReference>
<dbReference type="GO" id="GO:0009301">
    <property type="term" value="P:snRNA transcription"/>
    <property type="evidence" value="ECO:0000250"/>
    <property type="project" value="UniProtKB"/>
</dbReference>
<dbReference type="FunFam" id="1.25.40.820:FF:000001">
    <property type="entry name" value="RNA polymerase II subunit B1 CTD phosphatase Rpap2"/>
    <property type="match status" value="1"/>
</dbReference>
<dbReference type="Gene3D" id="1.25.40.820">
    <property type="match status" value="1"/>
</dbReference>
<dbReference type="InterPro" id="IPR039693">
    <property type="entry name" value="Rtr1/RPAP2"/>
</dbReference>
<dbReference type="InterPro" id="IPR007308">
    <property type="entry name" value="Rtr1/RPAP2_dom"/>
</dbReference>
<dbReference type="InterPro" id="IPR038534">
    <property type="entry name" value="Rtr1/RPAP2_sf"/>
</dbReference>
<dbReference type="PANTHER" id="PTHR14732">
    <property type="entry name" value="RNA POLYMERASE II SUBUNIT B1 CTD PHOSPHATASE RPAP2-RELATED"/>
    <property type="match status" value="1"/>
</dbReference>
<dbReference type="PANTHER" id="PTHR14732:SF0">
    <property type="entry name" value="RNA POLYMERASE II SUBUNIT B1 CTD PHOSPHATASE RPAP2-RELATED"/>
    <property type="match status" value="1"/>
</dbReference>
<dbReference type="Pfam" id="PF04181">
    <property type="entry name" value="RPAP2_Rtr1"/>
    <property type="match status" value="1"/>
</dbReference>
<dbReference type="PROSITE" id="PS51479">
    <property type="entry name" value="ZF_RTR1"/>
    <property type="match status" value="1"/>
</dbReference>
<accession>F6RRD7</accession>
<accession>A4FV88</accession>
<proteinExistence type="evidence at transcript level"/>